<gene>
    <name evidence="1" type="primary">eIF3f1</name>
    <name evidence="1" type="synonym">eIF3-S5-1</name>
    <name type="ORF">GK14430</name>
</gene>
<protein>
    <recommendedName>
        <fullName evidence="1">Eukaryotic translation initiation factor 3 subunit F-1</fullName>
        <shortName evidence="1">eIF3f-1</shortName>
    </recommendedName>
    <alternativeName>
        <fullName evidence="1">Eukaryotic translation initiation factor 3 subunit 5-1</fullName>
    </alternativeName>
</protein>
<reference key="1">
    <citation type="journal article" date="2007" name="Nature">
        <title>Evolution of genes and genomes on the Drosophila phylogeny.</title>
        <authorList>
            <consortium name="Drosophila 12 genomes consortium"/>
        </authorList>
    </citation>
    <scope>NUCLEOTIDE SEQUENCE [LARGE SCALE GENOMIC DNA]</scope>
    <source>
        <strain>Tucson 14030-0811.24</strain>
    </source>
</reference>
<name>EI3F1_DROWI</name>
<feature type="chain" id="PRO_0000364317" description="Eukaryotic translation initiation factor 3 subunit F-1">
    <location>
        <begin position="1"/>
        <end position="280"/>
    </location>
</feature>
<feature type="domain" description="MPN" evidence="2">
    <location>
        <begin position="8"/>
        <end position="138"/>
    </location>
</feature>
<comment type="function">
    <text evidence="1">Component of the eukaryotic translation initiation factor 3 (eIF-3) complex, which is involved in protein synthesis of a specialized repertoire of mRNAs and, together with other initiation factors, stimulates binding of mRNA and methionyl-tRNAi to the 40S ribosome. The eIF-3 complex specifically targets and initiates translation of a subset of mRNAs involved in cell proliferation.</text>
</comment>
<comment type="subunit">
    <text evidence="1">Component of the eukaryotic translation initiation factor 3 (eIF-3) complex. The eIF-3 complex interacts with pix.</text>
</comment>
<comment type="subcellular location">
    <subcellularLocation>
        <location evidence="1">Cytoplasm</location>
    </subcellularLocation>
</comment>
<comment type="similarity">
    <text evidence="1">Belongs to the eIF-3 subunit F family.</text>
</comment>
<keyword id="KW-0963">Cytoplasm</keyword>
<keyword id="KW-0396">Initiation factor</keyword>
<keyword id="KW-0648">Protein biosynthesis</keyword>
<keyword id="KW-1185">Reference proteome</keyword>
<proteinExistence type="inferred from homology"/>
<accession>B4NJR8</accession>
<sequence length="280" mass="31122">MSALNLTVRVHPVVLFQVVDAFERRNADSHRVIGTLLGSVDKGVVEVTNCFCVPHKEHDDQVEAELSYALDMYELNRKVNSNESVVGWWATGNEVTNHSSVIHEYYARECNNPVHVTVDTSLQGGRMGLRAYVCIQLGVPGGKSGCMFTPIPVELTSYEPETFGLKLLQKTVGVSPAHRPKTVPPMLDLAQISEASTKLQSLLDLILKYVDDVIAHKVTPDNAVGRQLLDLIHAVPHMTHEQFTQMFNANVRDLLMVITLSQLIKTQLQLNEKLTFLPTA</sequence>
<evidence type="ECO:0000255" key="1">
    <source>
        <dbReference type="HAMAP-Rule" id="MF_03005"/>
    </source>
</evidence>
<evidence type="ECO:0000255" key="2">
    <source>
        <dbReference type="PROSITE-ProRule" id="PRU01182"/>
    </source>
</evidence>
<dbReference type="EMBL" id="CH964272">
    <property type="protein sequence ID" value="EDW85030.1"/>
    <property type="molecule type" value="Genomic_DNA"/>
</dbReference>
<dbReference type="SMR" id="B4NJR8"/>
<dbReference type="STRING" id="7260.B4NJR8"/>
<dbReference type="EnsemblMetazoa" id="FBtr0245081">
    <property type="protein sequence ID" value="FBpp0243573"/>
    <property type="gene ID" value="FBgn0216436"/>
</dbReference>
<dbReference type="EnsemblMetazoa" id="XM_002074008.4">
    <property type="protein sequence ID" value="XP_002074044.1"/>
    <property type="gene ID" value="LOC6650092"/>
</dbReference>
<dbReference type="GeneID" id="6650092"/>
<dbReference type="KEGG" id="dwi:6650092"/>
<dbReference type="CTD" id="40587"/>
<dbReference type="eggNOG" id="KOG2975">
    <property type="taxonomic scope" value="Eukaryota"/>
</dbReference>
<dbReference type="HOGENOM" id="CLU_027018_0_1_1"/>
<dbReference type="OMA" id="EYFVHFH"/>
<dbReference type="OrthoDB" id="25498at2759"/>
<dbReference type="PhylomeDB" id="B4NJR8"/>
<dbReference type="Proteomes" id="UP000007798">
    <property type="component" value="Unassembled WGS sequence"/>
</dbReference>
<dbReference type="GO" id="GO:0016282">
    <property type="term" value="C:eukaryotic 43S preinitiation complex"/>
    <property type="evidence" value="ECO:0007669"/>
    <property type="project" value="UniProtKB-UniRule"/>
</dbReference>
<dbReference type="GO" id="GO:0033290">
    <property type="term" value="C:eukaryotic 48S preinitiation complex"/>
    <property type="evidence" value="ECO:0007669"/>
    <property type="project" value="UniProtKB-UniRule"/>
</dbReference>
<dbReference type="GO" id="GO:0071541">
    <property type="term" value="C:eukaryotic translation initiation factor 3 complex, eIF3m"/>
    <property type="evidence" value="ECO:0007669"/>
    <property type="project" value="TreeGrafter"/>
</dbReference>
<dbReference type="GO" id="GO:0140492">
    <property type="term" value="F:metal-dependent deubiquitinase activity"/>
    <property type="evidence" value="ECO:0007669"/>
    <property type="project" value="EnsemblMetazoa"/>
</dbReference>
<dbReference type="GO" id="GO:0003743">
    <property type="term" value="F:translation initiation factor activity"/>
    <property type="evidence" value="ECO:0007669"/>
    <property type="project" value="UniProtKB-UniRule"/>
</dbReference>
<dbReference type="GO" id="GO:0031369">
    <property type="term" value="F:translation initiation factor binding"/>
    <property type="evidence" value="ECO:0007669"/>
    <property type="project" value="InterPro"/>
</dbReference>
<dbReference type="GO" id="GO:0140367">
    <property type="term" value="P:antibacterial innate immune response"/>
    <property type="evidence" value="ECO:0007669"/>
    <property type="project" value="EnsemblMetazoa"/>
</dbReference>
<dbReference type="GO" id="GO:0050829">
    <property type="term" value="P:defense response to Gram-negative bacterium"/>
    <property type="evidence" value="ECO:0007669"/>
    <property type="project" value="EnsemblMetazoa"/>
</dbReference>
<dbReference type="GO" id="GO:0001732">
    <property type="term" value="P:formation of cytoplasmic translation initiation complex"/>
    <property type="evidence" value="ECO:0007669"/>
    <property type="project" value="UniProtKB-UniRule"/>
</dbReference>
<dbReference type="GO" id="GO:0045747">
    <property type="term" value="P:positive regulation of Notch signaling pathway"/>
    <property type="evidence" value="ECO:0007669"/>
    <property type="project" value="EnsemblMetazoa"/>
</dbReference>
<dbReference type="GO" id="GO:0061059">
    <property type="term" value="P:positive regulation of peptidoglycan recognition protein signaling pathway"/>
    <property type="evidence" value="ECO:0007669"/>
    <property type="project" value="EnsemblMetazoa"/>
</dbReference>
<dbReference type="CDD" id="cd08064">
    <property type="entry name" value="MPN_eIF3f"/>
    <property type="match status" value="1"/>
</dbReference>
<dbReference type="FunFam" id="3.40.140.10:FF:000014">
    <property type="entry name" value="Eukaryotic translation initiation factor 3 subunit F"/>
    <property type="match status" value="1"/>
</dbReference>
<dbReference type="Gene3D" id="3.40.140.10">
    <property type="entry name" value="Cytidine Deaminase, domain 2"/>
    <property type="match status" value="1"/>
</dbReference>
<dbReference type="HAMAP" id="MF_03005">
    <property type="entry name" value="eIF3f"/>
    <property type="match status" value="1"/>
</dbReference>
<dbReference type="InterPro" id="IPR027531">
    <property type="entry name" value="eIF3f"/>
</dbReference>
<dbReference type="InterPro" id="IPR024969">
    <property type="entry name" value="EIF3F/CSN6-like_C"/>
</dbReference>
<dbReference type="InterPro" id="IPR000555">
    <property type="entry name" value="JAMM/MPN+_dom"/>
</dbReference>
<dbReference type="InterPro" id="IPR037518">
    <property type="entry name" value="MPN"/>
</dbReference>
<dbReference type="PANTHER" id="PTHR10540:SF6">
    <property type="entry name" value="EUKARYOTIC TRANSLATION INITIATION FACTOR 3 SUBUNIT F"/>
    <property type="match status" value="1"/>
</dbReference>
<dbReference type="PANTHER" id="PTHR10540">
    <property type="entry name" value="EUKARYOTIC TRANSLATION INITIATION FACTOR 3 SUBUNIT F-RELATED"/>
    <property type="match status" value="1"/>
</dbReference>
<dbReference type="Pfam" id="PF01398">
    <property type="entry name" value="JAB"/>
    <property type="match status" value="1"/>
</dbReference>
<dbReference type="Pfam" id="PF13012">
    <property type="entry name" value="MitMem_reg"/>
    <property type="match status" value="1"/>
</dbReference>
<dbReference type="SMART" id="SM00232">
    <property type="entry name" value="JAB_MPN"/>
    <property type="match status" value="1"/>
</dbReference>
<dbReference type="PROSITE" id="PS50249">
    <property type="entry name" value="MPN"/>
    <property type="match status" value="1"/>
</dbReference>
<organism>
    <name type="scientific">Drosophila willistoni</name>
    <name type="common">Fruit fly</name>
    <dbReference type="NCBI Taxonomy" id="7260"/>
    <lineage>
        <taxon>Eukaryota</taxon>
        <taxon>Metazoa</taxon>
        <taxon>Ecdysozoa</taxon>
        <taxon>Arthropoda</taxon>
        <taxon>Hexapoda</taxon>
        <taxon>Insecta</taxon>
        <taxon>Pterygota</taxon>
        <taxon>Neoptera</taxon>
        <taxon>Endopterygota</taxon>
        <taxon>Diptera</taxon>
        <taxon>Brachycera</taxon>
        <taxon>Muscomorpha</taxon>
        <taxon>Ephydroidea</taxon>
        <taxon>Drosophilidae</taxon>
        <taxon>Drosophila</taxon>
        <taxon>Sophophora</taxon>
    </lineage>
</organism>